<proteinExistence type="inferred from homology"/>
<dbReference type="EC" id="7.-.-.-" evidence="1"/>
<dbReference type="EMBL" id="BX950851">
    <property type="protein sequence ID" value="CAG75180.1"/>
    <property type="molecule type" value="Genomic_DNA"/>
</dbReference>
<dbReference type="STRING" id="218491.ECA2277"/>
<dbReference type="KEGG" id="eca:ECA2277"/>
<dbReference type="PATRIC" id="fig|218491.5.peg.2307"/>
<dbReference type="eggNOG" id="COG2878">
    <property type="taxonomic scope" value="Bacteria"/>
</dbReference>
<dbReference type="HOGENOM" id="CLU_063448_2_0_6"/>
<dbReference type="OrthoDB" id="9789936at2"/>
<dbReference type="Proteomes" id="UP000007966">
    <property type="component" value="Chromosome"/>
</dbReference>
<dbReference type="GO" id="GO:0005886">
    <property type="term" value="C:plasma membrane"/>
    <property type="evidence" value="ECO:0007669"/>
    <property type="project" value="UniProtKB-SubCell"/>
</dbReference>
<dbReference type="GO" id="GO:0051539">
    <property type="term" value="F:4 iron, 4 sulfur cluster binding"/>
    <property type="evidence" value="ECO:0007669"/>
    <property type="project" value="UniProtKB-UniRule"/>
</dbReference>
<dbReference type="GO" id="GO:0009055">
    <property type="term" value="F:electron transfer activity"/>
    <property type="evidence" value="ECO:0007669"/>
    <property type="project" value="InterPro"/>
</dbReference>
<dbReference type="GO" id="GO:0046872">
    <property type="term" value="F:metal ion binding"/>
    <property type="evidence" value="ECO:0007669"/>
    <property type="project" value="UniProtKB-KW"/>
</dbReference>
<dbReference type="GO" id="GO:0022900">
    <property type="term" value="P:electron transport chain"/>
    <property type="evidence" value="ECO:0007669"/>
    <property type="project" value="UniProtKB-UniRule"/>
</dbReference>
<dbReference type="FunFam" id="1.10.15.40:FF:000001">
    <property type="entry name" value="Ion-translocating oxidoreductase complex subunit B"/>
    <property type="match status" value="1"/>
</dbReference>
<dbReference type="Gene3D" id="3.30.70.20">
    <property type="match status" value="1"/>
</dbReference>
<dbReference type="Gene3D" id="1.10.15.40">
    <property type="entry name" value="Electron transport complex subunit B, putative Fe-S cluster"/>
    <property type="match status" value="1"/>
</dbReference>
<dbReference type="HAMAP" id="MF_00463">
    <property type="entry name" value="RsxB_RnfB"/>
    <property type="match status" value="1"/>
</dbReference>
<dbReference type="InterPro" id="IPR007202">
    <property type="entry name" value="4Fe-4S_dom"/>
</dbReference>
<dbReference type="InterPro" id="IPR017896">
    <property type="entry name" value="4Fe4S_Fe-S-bd"/>
</dbReference>
<dbReference type="InterPro" id="IPR017900">
    <property type="entry name" value="4Fe4S_Fe_S_CS"/>
</dbReference>
<dbReference type="InterPro" id="IPR010207">
    <property type="entry name" value="Elect_transpt_cplx_RnfB/RsxB"/>
</dbReference>
<dbReference type="InterPro" id="IPR016463">
    <property type="entry name" value="RnfB/RsxB_Proteobac"/>
</dbReference>
<dbReference type="InterPro" id="IPR050294">
    <property type="entry name" value="RnfB_subfamily"/>
</dbReference>
<dbReference type="NCBIfam" id="NF003475">
    <property type="entry name" value="PRK05113.1"/>
    <property type="match status" value="1"/>
</dbReference>
<dbReference type="NCBIfam" id="TIGR01944">
    <property type="entry name" value="rnfB"/>
    <property type="match status" value="1"/>
</dbReference>
<dbReference type="PANTHER" id="PTHR42859:SF3">
    <property type="entry name" value="ION-TRANSLOCATING OXIDOREDUCTASE COMPLEX SUBUNIT B"/>
    <property type="match status" value="1"/>
</dbReference>
<dbReference type="PANTHER" id="PTHR42859">
    <property type="entry name" value="OXIDOREDUCTASE"/>
    <property type="match status" value="1"/>
</dbReference>
<dbReference type="Pfam" id="PF14697">
    <property type="entry name" value="Fer4_21"/>
    <property type="match status" value="1"/>
</dbReference>
<dbReference type="Pfam" id="PF04060">
    <property type="entry name" value="FeS"/>
    <property type="match status" value="1"/>
</dbReference>
<dbReference type="PIRSF" id="PIRSF005784">
    <property type="entry name" value="Elect_transpt_RnfB"/>
    <property type="match status" value="1"/>
</dbReference>
<dbReference type="SUPFAM" id="SSF54862">
    <property type="entry name" value="4Fe-4S ferredoxins"/>
    <property type="match status" value="1"/>
</dbReference>
<dbReference type="PROSITE" id="PS51656">
    <property type="entry name" value="4FE4S"/>
    <property type="match status" value="1"/>
</dbReference>
<dbReference type="PROSITE" id="PS00198">
    <property type="entry name" value="4FE4S_FER_1"/>
    <property type="match status" value="2"/>
</dbReference>
<dbReference type="PROSITE" id="PS51379">
    <property type="entry name" value="4FE4S_FER_2"/>
    <property type="match status" value="2"/>
</dbReference>
<sequence>MTAIWIAIAALSALALAFGLVLGYASRRFEVENDPIVEEVEAMLPQSQCGQCGYPGCRPYAEAVSLNGESINKCGPGGEAMMLKLAEKLNVDPQPLEGDADIQAPARHVAWIDESNCIGCTKCIQACPVDAIIGSTKAVHTVVSDLCTGCDLCISPCPTDCIELRPIAPTPANWKWDLDTIPVRVIQVERHA</sequence>
<gene>
    <name evidence="1" type="primary">rnfB</name>
    <name type="ordered locus">ECA2277</name>
</gene>
<organism>
    <name type="scientific">Pectobacterium atrosepticum (strain SCRI 1043 / ATCC BAA-672)</name>
    <name type="common">Erwinia carotovora subsp. atroseptica</name>
    <dbReference type="NCBI Taxonomy" id="218491"/>
    <lineage>
        <taxon>Bacteria</taxon>
        <taxon>Pseudomonadati</taxon>
        <taxon>Pseudomonadota</taxon>
        <taxon>Gammaproteobacteria</taxon>
        <taxon>Enterobacterales</taxon>
        <taxon>Pectobacteriaceae</taxon>
        <taxon>Pectobacterium</taxon>
    </lineage>
</organism>
<keyword id="KW-0004">4Fe-4S</keyword>
<keyword id="KW-0997">Cell inner membrane</keyword>
<keyword id="KW-1003">Cell membrane</keyword>
<keyword id="KW-0249">Electron transport</keyword>
<keyword id="KW-0408">Iron</keyword>
<keyword id="KW-0411">Iron-sulfur</keyword>
<keyword id="KW-0472">Membrane</keyword>
<keyword id="KW-0479">Metal-binding</keyword>
<keyword id="KW-1185">Reference proteome</keyword>
<keyword id="KW-0677">Repeat</keyword>
<keyword id="KW-1278">Translocase</keyword>
<keyword id="KW-0813">Transport</keyword>
<accession>Q6D4W3</accession>
<comment type="function">
    <text evidence="1">Part of a membrane-bound complex that couples electron transfer with translocation of ions across the membrane.</text>
</comment>
<comment type="cofactor">
    <cofactor evidence="1">
        <name>[4Fe-4S] cluster</name>
        <dbReference type="ChEBI" id="CHEBI:49883"/>
    </cofactor>
    <text evidence="1">Binds 3 [4Fe-4S] clusters.</text>
</comment>
<comment type="subunit">
    <text evidence="1">The complex is composed of six subunits: RnfA, RnfB, RnfC, RnfD, RnfE and RnfG.</text>
</comment>
<comment type="subcellular location">
    <subcellularLocation>
        <location evidence="1">Cell inner membrane</location>
    </subcellularLocation>
</comment>
<comment type="similarity">
    <text evidence="1">Belongs to the 4Fe4S bacterial-type ferredoxin family. RnfB subfamily.</text>
</comment>
<protein>
    <recommendedName>
        <fullName evidence="1">Ion-translocating oxidoreductase complex subunit B</fullName>
        <ecNumber evidence="1">7.-.-.-</ecNumber>
    </recommendedName>
    <alternativeName>
        <fullName evidence="1">Rnf electron transport complex subunit B</fullName>
    </alternativeName>
</protein>
<evidence type="ECO:0000255" key="1">
    <source>
        <dbReference type="HAMAP-Rule" id="MF_00463"/>
    </source>
</evidence>
<reference key="1">
    <citation type="journal article" date="2004" name="Proc. Natl. Acad. Sci. U.S.A.">
        <title>Genome sequence of the enterobacterial phytopathogen Erwinia carotovora subsp. atroseptica and characterization of virulence factors.</title>
        <authorList>
            <person name="Bell K.S."/>
            <person name="Sebaihia M."/>
            <person name="Pritchard L."/>
            <person name="Holden M.T.G."/>
            <person name="Hyman L.J."/>
            <person name="Holeva M.C."/>
            <person name="Thomson N.R."/>
            <person name="Bentley S.D."/>
            <person name="Churcher L.J.C."/>
            <person name="Mungall K."/>
            <person name="Atkin R."/>
            <person name="Bason N."/>
            <person name="Brooks K."/>
            <person name="Chillingworth T."/>
            <person name="Clark K."/>
            <person name="Doggett J."/>
            <person name="Fraser A."/>
            <person name="Hance Z."/>
            <person name="Hauser H."/>
            <person name="Jagels K."/>
            <person name="Moule S."/>
            <person name="Norbertczak H."/>
            <person name="Ormond D."/>
            <person name="Price C."/>
            <person name="Quail M.A."/>
            <person name="Sanders M."/>
            <person name="Walker D."/>
            <person name="Whitehead S."/>
            <person name="Salmond G.P.C."/>
            <person name="Birch P.R.J."/>
            <person name="Parkhill J."/>
            <person name="Toth I.K."/>
        </authorList>
    </citation>
    <scope>NUCLEOTIDE SEQUENCE [LARGE SCALE GENOMIC DNA]</scope>
    <source>
        <strain>SCRI 1043 / ATCC BAA-672</strain>
    </source>
</reference>
<feature type="chain" id="PRO_1000013645" description="Ion-translocating oxidoreductase complex subunit B">
    <location>
        <begin position="1"/>
        <end position="192"/>
    </location>
</feature>
<feature type="domain" description="4Fe-4S" evidence="1">
    <location>
        <begin position="32"/>
        <end position="91"/>
    </location>
</feature>
<feature type="domain" description="4Fe-4S ferredoxin-type 1" evidence="1">
    <location>
        <begin position="108"/>
        <end position="137"/>
    </location>
</feature>
<feature type="domain" description="4Fe-4S ferredoxin-type 2" evidence="1">
    <location>
        <begin position="138"/>
        <end position="167"/>
    </location>
</feature>
<feature type="region of interest" description="Hydrophobic" evidence="1">
    <location>
        <begin position="1"/>
        <end position="26"/>
    </location>
</feature>
<feature type="binding site" evidence="1">
    <location>
        <position position="49"/>
    </location>
    <ligand>
        <name>[4Fe-4S] cluster</name>
        <dbReference type="ChEBI" id="CHEBI:49883"/>
        <label>1</label>
    </ligand>
</feature>
<feature type="binding site" evidence="1">
    <location>
        <position position="52"/>
    </location>
    <ligand>
        <name>[4Fe-4S] cluster</name>
        <dbReference type="ChEBI" id="CHEBI:49883"/>
        <label>1</label>
    </ligand>
</feature>
<feature type="binding site" evidence="1">
    <location>
        <position position="57"/>
    </location>
    <ligand>
        <name>[4Fe-4S] cluster</name>
        <dbReference type="ChEBI" id="CHEBI:49883"/>
        <label>1</label>
    </ligand>
</feature>
<feature type="binding site" evidence="1">
    <location>
        <position position="74"/>
    </location>
    <ligand>
        <name>[4Fe-4S] cluster</name>
        <dbReference type="ChEBI" id="CHEBI:49883"/>
        <label>1</label>
    </ligand>
</feature>
<feature type="binding site" evidence="1">
    <location>
        <position position="117"/>
    </location>
    <ligand>
        <name>[4Fe-4S] cluster</name>
        <dbReference type="ChEBI" id="CHEBI:49883"/>
        <label>2</label>
    </ligand>
</feature>
<feature type="binding site" evidence="1">
    <location>
        <position position="120"/>
    </location>
    <ligand>
        <name>[4Fe-4S] cluster</name>
        <dbReference type="ChEBI" id="CHEBI:49883"/>
        <label>2</label>
    </ligand>
</feature>
<feature type="binding site" evidence="1">
    <location>
        <position position="123"/>
    </location>
    <ligand>
        <name>[4Fe-4S] cluster</name>
        <dbReference type="ChEBI" id="CHEBI:49883"/>
        <label>2</label>
    </ligand>
</feature>
<feature type="binding site" evidence="1">
    <location>
        <position position="127"/>
    </location>
    <ligand>
        <name>[4Fe-4S] cluster</name>
        <dbReference type="ChEBI" id="CHEBI:49883"/>
        <label>3</label>
    </ligand>
</feature>
<feature type="binding site" evidence="1">
    <location>
        <position position="147"/>
    </location>
    <ligand>
        <name>[4Fe-4S] cluster</name>
        <dbReference type="ChEBI" id="CHEBI:49883"/>
        <label>3</label>
    </ligand>
</feature>
<feature type="binding site" evidence="1">
    <location>
        <position position="150"/>
    </location>
    <ligand>
        <name>[4Fe-4S] cluster</name>
        <dbReference type="ChEBI" id="CHEBI:49883"/>
        <label>3</label>
    </ligand>
</feature>
<feature type="binding site" evidence="1">
    <location>
        <position position="153"/>
    </location>
    <ligand>
        <name>[4Fe-4S] cluster</name>
        <dbReference type="ChEBI" id="CHEBI:49883"/>
        <label>3</label>
    </ligand>
</feature>
<feature type="binding site" evidence="1">
    <location>
        <position position="157"/>
    </location>
    <ligand>
        <name>[4Fe-4S] cluster</name>
        <dbReference type="ChEBI" id="CHEBI:49883"/>
        <label>2</label>
    </ligand>
</feature>
<name>RNFB_PECAS</name>